<dbReference type="EMBL" id="AE016823">
    <property type="protein sequence ID" value="AAS71420.1"/>
    <property type="molecule type" value="Genomic_DNA"/>
</dbReference>
<dbReference type="RefSeq" id="WP_000529953.1">
    <property type="nucleotide sequence ID" value="NC_005823.1"/>
</dbReference>
<dbReference type="SMR" id="Q72NG7"/>
<dbReference type="GeneID" id="61142741"/>
<dbReference type="KEGG" id="lic:LIC_12867"/>
<dbReference type="HOGENOM" id="CLU_058591_0_2_12"/>
<dbReference type="Proteomes" id="UP000007037">
    <property type="component" value="Chromosome I"/>
</dbReference>
<dbReference type="GO" id="GO:0022627">
    <property type="term" value="C:cytosolic small ribosomal subunit"/>
    <property type="evidence" value="ECO:0007669"/>
    <property type="project" value="TreeGrafter"/>
</dbReference>
<dbReference type="GO" id="GO:0003729">
    <property type="term" value="F:mRNA binding"/>
    <property type="evidence" value="ECO:0007669"/>
    <property type="project" value="UniProtKB-UniRule"/>
</dbReference>
<dbReference type="GO" id="GO:0019843">
    <property type="term" value="F:rRNA binding"/>
    <property type="evidence" value="ECO:0007669"/>
    <property type="project" value="UniProtKB-UniRule"/>
</dbReference>
<dbReference type="GO" id="GO:0003735">
    <property type="term" value="F:structural constituent of ribosome"/>
    <property type="evidence" value="ECO:0007669"/>
    <property type="project" value="InterPro"/>
</dbReference>
<dbReference type="GO" id="GO:0006412">
    <property type="term" value="P:translation"/>
    <property type="evidence" value="ECO:0007669"/>
    <property type="project" value="UniProtKB-UniRule"/>
</dbReference>
<dbReference type="CDD" id="cd02412">
    <property type="entry name" value="KH-II_30S_S3"/>
    <property type="match status" value="1"/>
</dbReference>
<dbReference type="FunFam" id="3.30.1140.32:FF:000010">
    <property type="entry name" value="30S ribosomal protein S3"/>
    <property type="match status" value="1"/>
</dbReference>
<dbReference type="FunFam" id="3.30.300.20:FF:000001">
    <property type="entry name" value="30S ribosomal protein S3"/>
    <property type="match status" value="1"/>
</dbReference>
<dbReference type="Gene3D" id="3.30.300.20">
    <property type="match status" value="1"/>
</dbReference>
<dbReference type="Gene3D" id="3.30.1140.32">
    <property type="entry name" value="Ribosomal protein S3, C-terminal domain"/>
    <property type="match status" value="1"/>
</dbReference>
<dbReference type="HAMAP" id="MF_01309_B">
    <property type="entry name" value="Ribosomal_uS3_B"/>
    <property type="match status" value="1"/>
</dbReference>
<dbReference type="InterPro" id="IPR004087">
    <property type="entry name" value="KH_dom"/>
</dbReference>
<dbReference type="InterPro" id="IPR015946">
    <property type="entry name" value="KH_dom-like_a/b"/>
</dbReference>
<dbReference type="InterPro" id="IPR004044">
    <property type="entry name" value="KH_dom_type_2"/>
</dbReference>
<dbReference type="InterPro" id="IPR009019">
    <property type="entry name" value="KH_sf_prok-type"/>
</dbReference>
<dbReference type="InterPro" id="IPR036419">
    <property type="entry name" value="Ribosomal_S3_C_sf"/>
</dbReference>
<dbReference type="InterPro" id="IPR005704">
    <property type="entry name" value="Ribosomal_uS3_bac-typ"/>
</dbReference>
<dbReference type="InterPro" id="IPR001351">
    <property type="entry name" value="Ribosomal_uS3_C"/>
</dbReference>
<dbReference type="InterPro" id="IPR018280">
    <property type="entry name" value="Ribosomal_uS3_CS"/>
</dbReference>
<dbReference type="NCBIfam" id="TIGR01009">
    <property type="entry name" value="rpsC_bact"/>
    <property type="match status" value="1"/>
</dbReference>
<dbReference type="PANTHER" id="PTHR11760">
    <property type="entry name" value="30S/40S RIBOSOMAL PROTEIN S3"/>
    <property type="match status" value="1"/>
</dbReference>
<dbReference type="PANTHER" id="PTHR11760:SF19">
    <property type="entry name" value="SMALL RIBOSOMAL SUBUNIT PROTEIN US3C"/>
    <property type="match status" value="1"/>
</dbReference>
<dbReference type="Pfam" id="PF07650">
    <property type="entry name" value="KH_2"/>
    <property type="match status" value="1"/>
</dbReference>
<dbReference type="Pfam" id="PF00189">
    <property type="entry name" value="Ribosomal_S3_C"/>
    <property type="match status" value="1"/>
</dbReference>
<dbReference type="SMART" id="SM00322">
    <property type="entry name" value="KH"/>
    <property type="match status" value="1"/>
</dbReference>
<dbReference type="SUPFAM" id="SSF54814">
    <property type="entry name" value="Prokaryotic type KH domain (KH-domain type II)"/>
    <property type="match status" value="1"/>
</dbReference>
<dbReference type="SUPFAM" id="SSF54821">
    <property type="entry name" value="Ribosomal protein S3 C-terminal domain"/>
    <property type="match status" value="1"/>
</dbReference>
<dbReference type="PROSITE" id="PS50823">
    <property type="entry name" value="KH_TYPE_2"/>
    <property type="match status" value="1"/>
</dbReference>
<dbReference type="PROSITE" id="PS00548">
    <property type="entry name" value="RIBOSOMAL_S3"/>
    <property type="match status" value="1"/>
</dbReference>
<gene>
    <name evidence="1" type="primary">rpsC</name>
    <name type="ordered locus">LIC_12867</name>
</gene>
<name>RS3_LEPIC</name>
<protein>
    <recommendedName>
        <fullName evidence="1">Small ribosomal subunit protein uS3</fullName>
    </recommendedName>
    <alternativeName>
        <fullName evidence="2">30S ribosomal protein S3</fullName>
    </alternativeName>
</protein>
<organism>
    <name type="scientific">Leptospira interrogans serogroup Icterohaemorrhagiae serovar copenhageni (strain Fiocruz L1-130)</name>
    <dbReference type="NCBI Taxonomy" id="267671"/>
    <lineage>
        <taxon>Bacteria</taxon>
        <taxon>Pseudomonadati</taxon>
        <taxon>Spirochaetota</taxon>
        <taxon>Spirochaetia</taxon>
        <taxon>Leptospirales</taxon>
        <taxon>Leptospiraceae</taxon>
        <taxon>Leptospira</taxon>
    </lineage>
</organism>
<feature type="chain" id="PRO_0000130140" description="Small ribosomal subunit protein uS3">
    <location>
        <begin position="1"/>
        <end position="225"/>
    </location>
</feature>
<feature type="domain" description="KH type-2" evidence="1">
    <location>
        <begin position="38"/>
        <end position="106"/>
    </location>
</feature>
<comment type="function">
    <text evidence="1">Binds the lower part of the 30S subunit head. Binds mRNA in the 70S ribosome, positioning it for translation.</text>
</comment>
<comment type="subunit">
    <text evidence="1">Part of the 30S ribosomal subunit. Forms a tight complex with proteins S10 and S14.</text>
</comment>
<comment type="similarity">
    <text evidence="1">Belongs to the universal ribosomal protein uS3 family.</text>
</comment>
<keyword id="KW-0687">Ribonucleoprotein</keyword>
<keyword id="KW-0689">Ribosomal protein</keyword>
<keyword id="KW-0694">RNA-binding</keyword>
<keyword id="KW-0699">rRNA-binding</keyword>
<evidence type="ECO:0000255" key="1">
    <source>
        <dbReference type="HAMAP-Rule" id="MF_01309"/>
    </source>
</evidence>
<evidence type="ECO:0000305" key="2"/>
<proteinExistence type="inferred from homology"/>
<reference key="1">
    <citation type="journal article" date="2004" name="J. Bacteriol.">
        <title>Comparative genomics of two Leptospira interrogans serovars reveals novel insights into physiology and pathogenesis.</title>
        <authorList>
            <person name="Nascimento A.L.T.O."/>
            <person name="Ko A.I."/>
            <person name="Martins E.A.L."/>
            <person name="Monteiro-Vitorello C.B."/>
            <person name="Ho P.L."/>
            <person name="Haake D.A."/>
            <person name="Verjovski-Almeida S."/>
            <person name="Hartskeerl R.A."/>
            <person name="Marques M.V."/>
            <person name="Oliveira M.C."/>
            <person name="Menck C.F.M."/>
            <person name="Leite L.C.C."/>
            <person name="Carrer H."/>
            <person name="Coutinho L.L."/>
            <person name="Degrave W.M."/>
            <person name="Dellagostin O.A."/>
            <person name="El-Dorry H."/>
            <person name="Ferro E.S."/>
            <person name="Ferro M.I.T."/>
            <person name="Furlan L.R."/>
            <person name="Gamberini M."/>
            <person name="Giglioti E.A."/>
            <person name="Goes-Neto A."/>
            <person name="Goldman G.H."/>
            <person name="Goldman M.H.S."/>
            <person name="Harakava R."/>
            <person name="Jeronimo S.M.B."/>
            <person name="Junqueira-de-Azevedo I.L.M."/>
            <person name="Kimura E.T."/>
            <person name="Kuramae E.E."/>
            <person name="Lemos E.G.M."/>
            <person name="Lemos M.V.F."/>
            <person name="Marino C.L."/>
            <person name="Nunes L.R."/>
            <person name="de Oliveira R.C."/>
            <person name="Pereira G.G."/>
            <person name="Reis M.S."/>
            <person name="Schriefer A."/>
            <person name="Siqueira W.J."/>
            <person name="Sommer P."/>
            <person name="Tsai S.M."/>
            <person name="Simpson A.J.G."/>
            <person name="Ferro J.A."/>
            <person name="Camargo L.E.A."/>
            <person name="Kitajima J.P."/>
            <person name="Setubal J.C."/>
            <person name="Van Sluys M.A."/>
        </authorList>
    </citation>
    <scope>NUCLEOTIDE SEQUENCE [LARGE SCALE GENOMIC DNA]</scope>
    <source>
        <strain>Fiocruz L1-130</strain>
    </source>
</reference>
<accession>Q72NG7</accession>
<sequence>MGQKVNPIGLRIGITRGWDSIWFSQSDYKKNLHEDIKIRKFVQNRFNNAGVVKVVIERFPEKINVNLHTAKPGIVIGQKGANIEAVKKILKTMTDKPVNLNIIEVKKPETVAQCIAESIALQIEQRQPFRRVMKQELRRAMRGGVEGIKILISGRLNGADMARRENYKEGRIPLHTLRAKIDLGFKEAKTTFGQIGVKVWTYSGDFIQSKEESEEDKYAVKRRTS</sequence>